<name>ILVA_STAES</name>
<gene>
    <name type="primary">ilvA</name>
    <name type="ordered locus">SE_1662</name>
</gene>
<accession>Q8CNK9</accession>
<reference key="1">
    <citation type="journal article" date="2003" name="Mol. Microbiol.">
        <title>Genome-based analysis of virulence genes in a non-biofilm-forming Staphylococcus epidermidis strain (ATCC 12228).</title>
        <authorList>
            <person name="Zhang Y.-Q."/>
            <person name="Ren S.-X."/>
            <person name="Li H.-L."/>
            <person name="Wang Y.-X."/>
            <person name="Fu G."/>
            <person name="Yang J."/>
            <person name="Qin Z.-Q."/>
            <person name="Miao Y.-G."/>
            <person name="Wang W.-Y."/>
            <person name="Chen R.-S."/>
            <person name="Shen Y."/>
            <person name="Chen Z."/>
            <person name="Yuan Z.-H."/>
            <person name="Zhao G.-P."/>
            <person name="Qu D."/>
            <person name="Danchin A."/>
            <person name="Wen Y.-M."/>
        </authorList>
    </citation>
    <scope>NUCLEOTIDE SEQUENCE [LARGE SCALE GENOMIC DNA]</scope>
    <source>
        <strain>ATCC 12228 / FDA PCI 1200</strain>
    </source>
</reference>
<dbReference type="EC" id="4.3.1.19"/>
<dbReference type="EMBL" id="AE015929">
    <property type="protein sequence ID" value="AAO05261.1"/>
    <property type="status" value="ALT_INIT"/>
    <property type="molecule type" value="Genomic_DNA"/>
</dbReference>
<dbReference type="RefSeq" id="NP_765217.1">
    <property type="nucleotide sequence ID" value="NC_004461.1"/>
</dbReference>
<dbReference type="RefSeq" id="WP_001830018.1">
    <property type="nucleotide sequence ID" value="NZ_WBME01000022.1"/>
</dbReference>
<dbReference type="SMR" id="Q8CNK9"/>
<dbReference type="GeneID" id="50018239"/>
<dbReference type="KEGG" id="sep:SE_1662"/>
<dbReference type="PATRIC" id="fig|176280.10.peg.1626"/>
<dbReference type="eggNOG" id="COG1171">
    <property type="taxonomic scope" value="Bacteria"/>
</dbReference>
<dbReference type="HOGENOM" id="CLU_021152_4_2_9"/>
<dbReference type="OrthoDB" id="9811476at2"/>
<dbReference type="UniPathway" id="UPA00047">
    <property type="reaction ID" value="UER00054"/>
</dbReference>
<dbReference type="Proteomes" id="UP000001411">
    <property type="component" value="Chromosome"/>
</dbReference>
<dbReference type="GO" id="GO:0003941">
    <property type="term" value="F:L-serine ammonia-lyase activity"/>
    <property type="evidence" value="ECO:0007669"/>
    <property type="project" value="TreeGrafter"/>
</dbReference>
<dbReference type="GO" id="GO:0030170">
    <property type="term" value="F:pyridoxal phosphate binding"/>
    <property type="evidence" value="ECO:0007669"/>
    <property type="project" value="InterPro"/>
</dbReference>
<dbReference type="GO" id="GO:0004794">
    <property type="term" value="F:threonine deaminase activity"/>
    <property type="evidence" value="ECO:0007669"/>
    <property type="project" value="UniProtKB-EC"/>
</dbReference>
<dbReference type="GO" id="GO:0009097">
    <property type="term" value="P:isoleucine biosynthetic process"/>
    <property type="evidence" value="ECO:0007669"/>
    <property type="project" value="UniProtKB-UniPathway"/>
</dbReference>
<dbReference type="GO" id="GO:0006565">
    <property type="term" value="P:L-serine catabolic process"/>
    <property type="evidence" value="ECO:0007669"/>
    <property type="project" value="TreeGrafter"/>
</dbReference>
<dbReference type="GO" id="GO:0006567">
    <property type="term" value="P:threonine catabolic process"/>
    <property type="evidence" value="ECO:0007669"/>
    <property type="project" value="TreeGrafter"/>
</dbReference>
<dbReference type="GO" id="GO:0006566">
    <property type="term" value="P:threonine metabolic process"/>
    <property type="evidence" value="ECO:0000250"/>
    <property type="project" value="UniProtKB"/>
</dbReference>
<dbReference type="CDD" id="cd04907">
    <property type="entry name" value="ACT_ThrD-I_2"/>
    <property type="match status" value="1"/>
</dbReference>
<dbReference type="CDD" id="cd01562">
    <property type="entry name" value="Thr-dehyd"/>
    <property type="match status" value="1"/>
</dbReference>
<dbReference type="FunFam" id="3.40.50.1100:FF:000007">
    <property type="entry name" value="L-threonine dehydratase catabolic TdcB"/>
    <property type="match status" value="1"/>
</dbReference>
<dbReference type="Gene3D" id="3.40.50.1100">
    <property type="match status" value="2"/>
</dbReference>
<dbReference type="InterPro" id="IPR045865">
    <property type="entry name" value="ACT-like_dom_sf"/>
</dbReference>
<dbReference type="InterPro" id="IPR011820">
    <property type="entry name" value="IlvA"/>
</dbReference>
<dbReference type="InterPro" id="IPR050147">
    <property type="entry name" value="Ser/Thr_Dehydratase"/>
</dbReference>
<dbReference type="InterPro" id="IPR000634">
    <property type="entry name" value="Ser/Thr_deHydtase_PyrdxlP-BS"/>
</dbReference>
<dbReference type="InterPro" id="IPR001721">
    <property type="entry name" value="TD_ACT-like"/>
</dbReference>
<dbReference type="InterPro" id="IPR001926">
    <property type="entry name" value="TrpB-like_PALP"/>
</dbReference>
<dbReference type="InterPro" id="IPR036052">
    <property type="entry name" value="TrpB-like_PALP_sf"/>
</dbReference>
<dbReference type="NCBIfam" id="NF006390">
    <property type="entry name" value="PRK08639.1"/>
    <property type="match status" value="1"/>
</dbReference>
<dbReference type="NCBIfam" id="TIGR02079">
    <property type="entry name" value="THD1"/>
    <property type="match status" value="1"/>
</dbReference>
<dbReference type="PANTHER" id="PTHR48078:SF11">
    <property type="entry name" value="THREONINE DEHYDRATASE, MITOCHONDRIAL"/>
    <property type="match status" value="1"/>
</dbReference>
<dbReference type="PANTHER" id="PTHR48078">
    <property type="entry name" value="THREONINE DEHYDRATASE, MITOCHONDRIAL-RELATED"/>
    <property type="match status" value="1"/>
</dbReference>
<dbReference type="Pfam" id="PF00291">
    <property type="entry name" value="PALP"/>
    <property type="match status" value="1"/>
</dbReference>
<dbReference type="Pfam" id="PF00585">
    <property type="entry name" value="Thr_dehydrat_C"/>
    <property type="match status" value="1"/>
</dbReference>
<dbReference type="SUPFAM" id="SSF55021">
    <property type="entry name" value="ACT-like"/>
    <property type="match status" value="1"/>
</dbReference>
<dbReference type="SUPFAM" id="SSF53686">
    <property type="entry name" value="Tryptophan synthase beta subunit-like PLP-dependent enzymes"/>
    <property type="match status" value="1"/>
</dbReference>
<dbReference type="PROSITE" id="PS51672">
    <property type="entry name" value="ACT_LIKE"/>
    <property type="match status" value="1"/>
</dbReference>
<dbReference type="PROSITE" id="PS00165">
    <property type="entry name" value="DEHYDRATASE_SER_THR"/>
    <property type="match status" value="1"/>
</dbReference>
<keyword id="KW-0028">Amino-acid biosynthesis</keyword>
<keyword id="KW-0100">Branched-chain amino acid biosynthesis</keyword>
<keyword id="KW-0412">Isoleucine biosynthesis</keyword>
<keyword id="KW-0456">Lyase</keyword>
<keyword id="KW-0663">Pyridoxal phosphate</keyword>
<evidence type="ECO:0000250" key="1"/>
<evidence type="ECO:0000255" key="2">
    <source>
        <dbReference type="PROSITE-ProRule" id="PRU01008"/>
    </source>
</evidence>
<evidence type="ECO:0000305" key="3"/>
<proteinExistence type="inferred from homology"/>
<feature type="chain" id="PRO_0000234313" description="L-threonine dehydratase biosynthetic IlvA">
    <location>
        <begin position="1"/>
        <end position="422"/>
    </location>
</feature>
<feature type="domain" description="ACT-like" evidence="2">
    <location>
        <begin position="339"/>
        <end position="413"/>
    </location>
</feature>
<feature type="binding site" evidence="1">
    <location>
        <position position="83"/>
    </location>
    <ligand>
        <name>pyridoxal 5'-phosphate</name>
        <dbReference type="ChEBI" id="CHEBI:597326"/>
    </ligand>
</feature>
<feature type="binding site" evidence="1">
    <location>
        <begin position="189"/>
        <end position="193"/>
    </location>
    <ligand>
        <name>pyridoxal 5'-phosphate</name>
        <dbReference type="ChEBI" id="CHEBI:597326"/>
    </ligand>
</feature>
<feature type="binding site" evidence="1">
    <location>
        <position position="315"/>
    </location>
    <ligand>
        <name>pyridoxal 5'-phosphate</name>
        <dbReference type="ChEBI" id="CHEBI:597326"/>
    </ligand>
</feature>
<feature type="modified residue" description="N6-(pyridoxal phosphate)lysine" evidence="1">
    <location>
        <position position="56"/>
    </location>
</feature>
<protein>
    <recommendedName>
        <fullName>L-threonine dehydratase biosynthetic IlvA</fullName>
        <ecNumber>4.3.1.19</ecNumber>
    </recommendedName>
    <alternativeName>
        <fullName>Threonine deaminase</fullName>
    </alternativeName>
</protein>
<sequence length="422" mass="47381">MTVRTKVSTKDIDEAYLRLKNIVKETPLQFDHYLSQKYNCNVYLKREDLQWVRSFKLRGAYNAISVLSNEEKNKGITCASAGNHAQGVAYTAKKLNLKAVIFMPVTTPRQKINQVKFFGDSNVEIVLIGDTFDHCLAQALNYTKQHKMNFIDPFNNVYTIAGQGTLAKEILNQAEKEDKTFDYVFAAIGGGGLISGVSTYFKAHSPHTKIIGVEPTGASSMYQSVVINHSIVTLENIDKFVDGASVARVGDITFDIAKDKVDDYVQVDEGAVCSTILDMYSKQAIVAEPAGALSVSALEQYKKQIENKTIVCIVSGGNNDINRMKEIEERSLLFEEMKHYFILNFPQRPGALREFVNDVLGPQDDITKFEYLKKTSQNTGTVIIGIQLKHHDDLIQLKDRVCQFDPSNIYINENKMLYSLLI</sequence>
<organism>
    <name type="scientific">Staphylococcus epidermidis (strain ATCC 12228 / FDA PCI 1200)</name>
    <dbReference type="NCBI Taxonomy" id="176280"/>
    <lineage>
        <taxon>Bacteria</taxon>
        <taxon>Bacillati</taxon>
        <taxon>Bacillota</taxon>
        <taxon>Bacilli</taxon>
        <taxon>Bacillales</taxon>
        <taxon>Staphylococcaceae</taxon>
        <taxon>Staphylococcus</taxon>
    </lineage>
</organism>
<comment type="function">
    <text evidence="1">Catalyzes the anaerobic formation of alpha-ketobutyrate and ammonia from threonine in a two-step reaction. The first step involved a dehydration of threonine and a production of enamine intermediates (aminocrotonate), which tautomerizes to its imine form (iminobutyrate). Both intermediates are unstable and short-lived. The second step is the nonenzymatic hydrolysis of the enamine/imine intermediates to form 2-ketobutyrate and free ammonia. In the low water environment of the cell, the second step is accelerated by RidA (By similarity).</text>
</comment>
<comment type="catalytic activity">
    <reaction>
        <text>L-threonine = 2-oxobutanoate + NH4(+)</text>
        <dbReference type="Rhea" id="RHEA:22108"/>
        <dbReference type="ChEBI" id="CHEBI:16763"/>
        <dbReference type="ChEBI" id="CHEBI:28938"/>
        <dbReference type="ChEBI" id="CHEBI:57926"/>
        <dbReference type="EC" id="4.3.1.19"/>
    </reaction>
</comment>
<comment type="cofactor">
    <cofactor evidence="1">
        <name>pyridoxal 5'-phosphate</name>
        <dbReference type="ChEBI" id="CHEBI:597326"/>
    </cofactor>
</comment>
<comment type="pathway">
    <text>Amino-acid biosynthesis; L-isoleucine biosynthesis; 2-oxobutanoate from L-threonine: step 1/1.</text>
</comment>
<comment type="subunit">
    <text evidence="1">Homotetramer.</text>
</comment>
<comment type="similarity">
    <text evidence="3">Belongs to the serine/threonine dehydratase family.</text>
</comment>
<comment type="sequence caution" evidence="3">
    <conflict type="erroneous initiation">
        <sequence resource="EMBL-CDS" id="AAO05261"/>
    </conflict>
    <text>Extended N-terminus.</text>
</comment>